<gene>
    <name type="primary">Dync1i1</name>
    <name type="synonym">Dnci1</name>
    <name type="synonym">Dncic1</name>
</gene>
<comment type="function">
    <text>Acts as one of several non-catalytic accessory components of the cytoplasmic dynein 1 complex that are thought to be involved in linking dynein to cargos and to adapter proteins that regulate dynein function. Cytoplasmic dynein 1 acts as a motor for the intracellular retrograde motility of vesicles and organelles along microtubules. The intermediate chains mediate the binding of dynein to dynactin via its 150 kDa component (p150-glued) DCTN1. May play a role in mediating the interaction of cytoplasmic dynein with membranous organelles and kinetochores.</text>
</comment>
<comment type="subunit">
    <text evidence="1 2 6">Homodimer (By similarity). The cytoplasmic dynein 1 complex consists of two catalytic heavy chains (HCs) and a number of non-catalytic subunits presented by intermediate chains (ICs), light intermediate chains (LICs) and light chains (LCs); the composition seems to vary in respect to the IC, LIC and LC composition. The heavy chain homodimer serves as a scaffold for the probable homodimeric assembly of the respective non-catalytic subunits. The ICs and LICs bind directly to the HC dimer and the LCs assemble on the IC dimer. Interacts with DYNC1H1. Interacts with DYNLT1 and DYNLT3. Interacts with DCTN1 (By similarity). Interacts with DYNLL2. Interacts with MCRS1; the interaction is required for the proper distribution of centriolar satellites (By similarity).</text>
</comment>
<comment type="interaction">
    <interactant intactId="EBI-492834">
        <id>O88485</id>
    </interactant>
    <interactant intactId="EBI-2024439">
        <id>Q64368</id>
        <label>Dazl</label>
    </interactant>
    <organismsDiffer>false</organismsDiffer>
    <experiments>4</experiments>
</comment>
<comment type="interaction">
    <interactant intactId="EBI-492834">
        <id>O88485</id>
    </interactant>
    <interactant intactId="EBI-349121">
        <id>P63168</id>
        <label>Dynll1</label>
    </interactant>
    <organismsDiffer>false</organismsDiffer>
    <experiments>2</experiments>
</comment>
<comment type="interaction">
    <interactant intactId="EBI-492834">
        <id>O88485</id>
    </interactant>
    <interactant intactId="EBI-776129">
        <id>Q61768</id>
        <label>Kif5b</label>
    </interactant>
    <organismsDiffer>false</organismsDiffer>
    <experiments>4</experiments>
</comment>
<comment type="interaction">
    <interactant intactId="EBI-492834">
        <id>O88485</id>
    </interactant>
    <interactant intactId="EBI-492753">
        <id>P06537</id>
        <label>Nr3c1</label>
    </interactant>
    <organismsDiffer>false</organismsDiffer>
    <experiments>2</experiments>
</comment>
<comment type="interaction">
    <interactant intactId="EBI-492834">
        <id>O88485</id>
    </interactant>
    <interactant intactId="EBI-466029">
        <id>P42858</id>
        <label>HTT</label>
    </interactant>
    <organismsDiffer>true</organismsDiffer>
    <experiments>2</experiments>
</comment>
<comment type="subcellular location">
    <subcellularLocation>
        <location evidence="1">Cytoplasm</location>
    </subcellularLocation>
    <subcellularLocation>
        <location evidence="1">Chromosome</location>
        <location evidence="1">Centromere</location>
        <location evidence="1">Kinetochore</location>
    </subcellularLocation>
    <subcellularLocation>
        <location evidence="1">Cytoplasm</location>
        <location evidence="1">Cytoskeleton</location>
        <location evidence="1">Spindle pole</location>
    </subcellularLocation>
</comment>
<comment type="alternative products">
    <event type="alternative splicing"/>
    <isoform>
        <id>O88485-1</id>
        <name>1A</name>
        <sequence type="displayed"/>
    </isoform>
    <isoform>
        <id>O88485-2</id>
        <name>1B</name>
        <sequence type="described" ref="VSP_001334"/>
    </isoform>
    <text>Additional isoforms seem to exist.</text>
</comment>
<comment type="similarity">
    <text evidence="8">Belongs to the dynein intermediate chain family.</text>
</comment>
<organism>
    <name type="scientific">Mus musculus</name>
    <name type="common">Mouse</name>
    <dbReference type="NCBI Taxonomy" id="10090"/>
    <lineage>
        <taxon>Eukaryota</taxon>
        <taxon>Metazoa</taxon>
        <taxon>Chordata</taxon>
        <taxon>Craniata</taxon>
        <taxon>Vertebrata</taxon>
        <taxon>Euteleostomi</taxon>
        <taxon>Mammalia</taxon>
        <taxon>Eutheria</taxon>
        <taxon>Euarchontoglires</taxon>
        <taxon>Glires</taxon>
        <taxon>Rodentia</taxon>
        <taxon>Myomorpha</taxon>
        <taxon>Muroidea</taxon>
        <taxon>Muridae</taxon>
        <taxon>Murinae</taxon>
        <taxon>Mus</taxon>
        <taxon>Mus</taxon>
    </lineage>
</organism>
<name>DC1I1_MOUSE</name>
<protein>
    <recommendedName>
        <fullName>Cytoplasmic dynein 1 intermediate chain 1</fullName>
    </recommendedName>
    <alternativeName>
        <fullName>Cytoplasmic dynein intermediate chain 1</fullName>
    </alternativeName>
    <alternativeName>
        <fullName>Dynein intermediate chain 1, cytosolic</fullName>
        <shortName>DH IC-1</shortName>
    </alternativeName>
</protein>
<evidence type="ECO:0000250" key="1"/>
<evidence type="ECO:0000250" key="2">
    <source>
        <dbReference type="UniProtKB" id="O14576"/>
    </source>
</evidence>
<evidence type="ECO:0000250" key="3">
    <source>
        <dbReference type="UniProtKB" id="Q13409"/>
    </source>
</evidence>
<evidence type="ECO:0000250" key="4">
    <source>
        <dbReference type="UniProtKB" id="Q62871"/>
    </source>
</evidence>
<evidence type="ECO:0000256" key="5">
    <source>
        <dbReference type="SAM" id="MobiDB-lite"/>
    </source>
</evidence>
<evidence type="ECO:0000269" key="6">
    <source>
    </source>
</evidence>
<evidence type="ECO:0000303" key="7">
    <source>
    </source>
</evidence>
<evidence type="ECO:0000305" key="8"/>
<evidence type="ECO:0007744" key="9">
    <source>
    </source>
</evidence>
<proteinExistence type="evidence at protein level"/>
<keyword id="KW-0007">Acetylation</keyword>
<keyword id="KW-0025">Alternative splicing</keyword>
<keyword id="KW-0137">Centromere</keyword>
<keyword id="KW-0158">Chromosome</keyword>
<keyword id="KW-0963">Cytoplasm</keyword>
<keyword id="KW-0206">Cytoskeleton</keyword>
<keyword id="KW-0243">Dynein</keyword>
<keyword id="KW-0995">Kinetochore</keyword>
<keyword id="KW-0493">Microtubule</keyword>
<keyword id="KW-0505">Motor protein</keyword>
<keyword id="KW-0597">Phosphoprotein</keyword>
<keyword id="KW-1185">Reference proteome</keyword>
<keyword id="KW-0677">Repeat</keyword>
<keyword id="KW-0813">Transport</keyword>
<keyword id="KW-0853">WD repeat</keyword>
<sequence length="628" mass="70725">MSDKSDLKAELERKKQRLAQIREEKKRKEEERKKKEADMQQKKEPVQDDSDLDRKRRETEALLQSIGISPEPPLVPTPMSPSSKSVSTPSDAGSQDSGDLGPLTRTLQWDTDPSVLQLQSDSELGRRLHKLGVSKVTQVDFLPREVVSYSKETQTPLATHQSEEDEEDEEMVEPKIGHDSELENQEKKQETKEAPPRELTEEEKQQILHSEEFLIFFDRTIRVIERALAEDSDIFFDYSGRELEEKDGDVQAGANLSFNRQFYDEHWSKHRVVTCMDWSLQYPELMVASYSNNEDAPHEPDGVALVWNMKFKKTTPEYVFHCQSSVMSVCFARFHPNLVVGGTYSGQIVLWDNRSHRRTPVQRTPLSAAAHTHPVYCVNVVGTQNAHNLITVSTDGKMCSWSLDMLSTPQESMELVYNKSKPVAVTGMAFPTGDVNNFVVGSEEGTVYTACRHGSKAGIGEVFEGHQGPVTGINCHMAVGPIDFSHLFVTSSFDWTVKLWTTKHNKPLYSFEDNADYVYDVMWSPVHPALFACVDGMGRLDLWNLNSDTEVPTASVAIEGASALNRVRWAQGGKEVAVGDSEGRIWIYDVGELAVPHNDEWTRFARTLVEIRANRADSEEEGAVELAA</sequence>
<dbReference type="EMBL" id="AF063229">
    <property type="protein sequence ID" value="AAC33444.1"/>
    <property type="molecule type" value="mRNA"/>
</dbReference>
<dbReference type="EMBL" id="AF063230">
    <property type="protein sequence ID" value="AAC33445.1"/>
    <property type="molecule type" value="mRNA"/>
</dbReference>
<dbReference type="EMBL" id="CH466533">
    <property type="protein sequence ID" value="EDL13960.1"/>
    <property type="molecule type" value="Genomic_DNA"/>
</dbReference>
<dbReference type="EMBL" id="BC051992">
    <property type="protein sequence ID" value="AAH51992.1"/>
    <property type="molecule type" value="mRNA"/>
</dbReference>
<dbReference type="CCDS" id="CCDS19903.1">
    <molecule id="O88485-1"/>
</dbReference>
<dbReference type="CCDS" id="CCDS57408.1">
    <molecule id="O88485-2"/>
</dbReference>
<dbReference type="RefSeq" id="NP_001177952.1">
    <property type="nucleotide sequence ID" value="NM_001191023.1"/>
</dbReference>
<dbReference type="RefSeq" id="NP_001177954.1">
    <molecule id="O88485-2"/>
    <property type="nucleotide sequence ID" value="NM_001191025.2"/>
</dbReference>
<dbReference type="RefSeq" id="NP_001396537.1">
    <molecule id="O88485-1"/>
    <property type="nucleotide sequence ID" value="NM_001409608.1"/>
</dbReference>
<dbReference type="RefSeq" id="NP_001396538.1">
    <molecule id="O88485-1"/>
    <property type="nucleotide sequence ID" value="NM_001409609.1"/>
</dbReference>
<dbReference type="RefSeq" id="NP_034193.2">
    <molecule id="O88485-1"/>
    <property type="nucleotide sequence ID" value="NM_010063.5"/>
</dbReference>
<dbReference type="SMR" id="O88485"/>
<dbReference type="BioGRID" id="199255">
    <property type="interactions" value="49"/>
</dbReference>
<dbReference type="CORUM" id="O88485"/>
<dbReference type="DIP" id="DIP-32048N"/>
<dbReference type="ELM" id="O88485"/>
<dbReference type="FunCoup" id="O88485">
    <property type="interactions" value="1244"/>
</dbReference>
<dbReference type="IntAct" id="O88485">
    <property type="interactions" value="12"/>
</dbReference>
<dbReference type="MINT" id="O88485"/>
<dbReference type="STRING" id="10090.ENSMUSP00000111221"/>
<dbReference type="GlyGen" id="O88485">
    <property type="glycosylation" value="1 site"/>
</dbReference>
<dbReference type="iPTMnet" id="O88485"/>
<dbReference type="PhosphoSitePlus" id="O88485"/>
<dbReference type="SwissPalm" id="O88485"/>
<dbReference type="PaxDb" id="10090-ENSMUSP00000111221"/>
<dbReference type="PeptideAtlas" id="O88485"/>
<dbReference type="ProteomicsDB" id="279170">
    <molecule id="O88485-1"/>
</dbReference>
<dbReference type="ProteomicsDB" id="279171">
    <molecule id="O88485-2"/>
</dbReference>
<dbReference type="Antibodypedia" id="15905">
    <property type="antibodies" value="162 antibodies from 26 providers"/>
</dbReference>
<dbReference type="DNASU" id="13426"/>
<dbReference type="Ensembl" id="ENSMUST00000115554.4">
    <molecule id="O88485-2"/>
    <property type="protein sequence ID" value="ENSMUSP00000111216.2"/>
    <property type="gene ID" value="ENSMUSG00000029757.17"/>
</dbReference>
<dbReference type="Ensembl" id="ENSMUST00000115559.10">
    <molecule id="O88485-1"/>
    <property type="protein sequence ID" value="ENSMUSP00000111221.4"/>
    <property type="gene ID" value="ENSMUSG00000029757.17"/>
</dbReference>
<dbReference type="GeneID" id="13426"/>
<dbReference type="KEGG" id="mmu:13426"/>
<dbReference type="UCSC" id="uc009awm.2">
    <molecule id="O88485-2"/>
    <property type="organism name" value="mouse"/>
</dbReference>
<dbReference type="UCSC" id="uc012ehw.1">
    <molecule id="O88485-1"/>
    <property type="organism name" value="mouse"/>
</dbReference>
<dbReference type="AGR" id="MGI:107743"/>
<dbReference type="CTD" id="1780"/>
<dbReference type="MGI" id="MGI:107743">
    <property type="gene designation" value="Dync1i1"/>
</dbReference>
<dbReference type="VEuPathDB" id="HostDB:ENSMUSG00000029757"/>
<dbReference type="eggNOG" id="KOG1587">
    <property type="taxonomic scope" value="Eukaryota"/>
</dbReference>
<dbReference type="GeneTree" id="ENSGT00940000156032"/>
<dbReference type="HOGENOM" id="CLU_012999_1_1_1"/>
<dbReference type="InParanoid" id="O88485"/>
<dbReference type="OMA" id="CTCMSFA"/>
<dbReference type="TreeFam" id="TF300553"/>
<dbReference type="Reactome" id="R-MMU-141444">
    <property type="pathway name" value="Amplification of signal from unattached kinetochores via a MAD2 inhibitory signal"/>
</dbReference>
<dbReference type="Reactome" id="R-MMU-2132295">
    <property type="pathway name" value="MHC class II antigen presentation"/>
</dbReference>
<dbReference type="Reactome" id="R-MMU-2467813">
    <property type="pathway name" value="Separation of Sister Chromatids"/>
</dbReference>
<dbReference type="Reactome" id="R-MMU-2500257">
    <property type="pathway name" value="Resolution of Sister Chromatid Cohesion"/>
</dbReference>
<dbReference type="Reactome" id="R-MMU-3371497">
    <property type="pathway name" value="HSP90 chaperone cycle for steroid hormone receptors (SHR) in the presence of ligand"/>
</dbReference>
<dbReference type="Reactome" id="R-MMU-5663220">
    <property type="pathway name" value="RHO GTPases Activate Formins"/>
</dbReference>
<dbReference type="Reactome" id="R-MMU-6807878">
    <property type="pathway name" value="COPI-mediated anterograde transport"/>
</dbReference>
<dbReference type="Reactome" id="R-MMU-6811436">
    <property type="pathway name" value="COPI-independent Golgi-to-ER retrograde traffic"/>
</dbReference>
<dbReference type="Reactome" id="R-MMU-68877">
    <property type="pathway name" value="Mitotic Prometaphase"/>
</dbReference>
<dbReference type="Reactome" id="R-MMU-9646399">
    <property type="pathway name" value="Aggrephagy"/>
</dbReference>
<dbReference type="Reactome" id="R-MMU-9648025">
    <property type="pathway name" value="EML4 and NUDC in mitotic spindle formation"/>
</dbReference>
<dbReference type="BioGRID-ORCS" id="13426">
    <property type="hits" value="2 hits in 78 CRISPR screens"/>
</dbReference>
<dbReference type="CD-CODE" id="CE726F99">
    <property type="entry name" value="Postsynaptic density"/>
</dbReference>
<dbReference type="ChiTaRS" id="Dync1i1">
    <property type="organism name" value="mouse"/>
</dbReference>
<dbReference type="PRO" id="PR:O88485"/>
<dbReference type="Proteomes" id="UP000000589">
    <property type="component" value="Chromosome 6"/>
</dbReference>
<dbReference type="RNAct" id="O88485">
    <property type="molecule type" value="protein"/>
</dbReference>
<dbReference type="Bgee" id="ENSMUSG00000029757">
    <property type="expression patterns" value="Expressed in pontine nuclear group and 194 other cell types or tissues"/>
</dbReference>
<dbReference type="ExpressionAtlas" id="O88485">
    <property type="expression patterns" value="baseline and differential"/>
</dbReference>
<dbReference type="GO" id="GO:0005868">
    <property type="term" value="C:cytoplasmic dynein complex"/>
    <property type="evidence" value="ECO:0000250"/>
    <property type="project" value="UniProtKB"/>
</dbReference>
<dbReference type="GO" id="GO:0000776">
    <property type="term" value="C:kinetochore"/>
    <property type="evidence" value="ECO:0000250"/>
    <property type="project" value="UniProtKB"/>
</dbReference>
<dbReference type="GO" id="GO:0005874">
    <property type="term" value="C:microtubule"/>
    <property type="evidence" value="ECO:0007669"/>
    <property type="project" value="UniProtKB-KW"/>
</dbReference>
<dbReference type="GO" id="GO:0048471">
    <property type="term" value="C:perinuclear region of cytoplasm"/>
    <property type="evidence" value="ECO:0000250"/>
    <property type="project" value="HGNC-UCL"/>
</dbReference>
<dbReference type="GO" id="GO:0000922">
    <property type="term" value="C:spindle pole"/>
    <property type="evidence" value="ECO:0000250"/>
    <property type="project" value="UniProtKB"/>
</dbReference>
<dbReference type="GO" id="GO:0031982">
    <property type="term" value="C:vesicle"/>
    <property type="evidence" value="ECO:0000250"/>
    <property type="project" value="UniProtKB"/>
</dbReference>
<dbReference type="GO" id="GO:0045503">
    <property type="term" value="F:dynein light chain binding"/>
    <property type="evidence" value="ECO:0000353"/>
    <property type="project" value="MGI"/>
</dbReference>
<dbReference type="GO" id="GO:0008017">
    <property type="term" value="F:microtubule binding"/>
    <property type="evidence" value="ECO:0000250"/>
    <property type="project" value="HGNC-UCL"/>
</dbReference>
<dbReference type="GO" id="GO:0003777">
    <property type="term" value="F:microtubule motor activity"/>
    <property type="evidence" value="ECO:0000250"/>
    <property type="project" value="HGNC-UCL"/>
</dbReference>
<dbReference type="GO" id="GO:0030507">
    <property type="term" value="F:spectrin binding"/>
    <property type="evidence" value="ECO:0000266"/>
    <property type="project" value="MGI"/>
</dbReference>
<dbReference type="GO" id="GO:0047496">
    <property type="term" value="P:vesicle transport along microtubule"/>
    <property type="evidence" value="ECO:0000250"/>
    <property type="project" value="HGNC-UCL"/>
</dbReference>
<dbReference type="FunFam" id="2.130.10.10:FF:000108">
    <property type="entry name" value="cytoplasmic dynein 1 intermediate chain 1 isoform X1"/>
    <property type="match status" value="1"/>
</dbReference>
<dbReference type="FunFam" id="2.130.10.10:FF:000026">
    <property type="entry name" value="cytoplasmic dynein 1 intermediate chain 2 isoform X2"/>
    <property type="match status" value="1"/>
</dbReference>
<dbReference type="Gene3D" id="2.130.10.10">
    <property type="entry name" value="YVTN repeat-like/Quinoprotein amine dehydrogenase"/>
    <property type="match status" value="2"/>
</dbReference>
<dbReference type="InterPro" id="IPR025956">
    <property type="entry name" value="DYNC1I1/DYNC1I2"/>
</dbReference>
<dbReference type="InterPro" id="IPR050687">
    <property type="entry name" value="Dynein_IC"/>
</dbReference>
<dbReference type="InterPro" id="IPR015943">
    <property type="entry name" value="WD40/YVTN_repeat-like_dom_sf"/>
</dbReference>
<dbReference type="InterPro" id="IPR036322">
    <property type="entry name" value="WD40_repeat_dom_sf"/>
</dbReference>
<dbReference type="InterPro" id="IPR001680">
    <property type="entry name" value="WD40_rpt"/>
</dbReference>
<dbReference type="PANTHER" id="PTHR12442:SF34">
    <property type="entry name" value="CYTOPLASMIC DYNEIN 1 INTERMEDIATE CHAIN 1"/>
    <property type="match status" value="1"/>
</dbReference>
<dbReference type="PANTHER" id="PTHR12442">
    <property type="entry name" value="DYNEIN INTERMEDIATE CHAIN"/>
    <property type="match status" value="1"/>
</dbReference>
<dbReference type="Pfam" id="PF11540">
    <property type="entry name" value="Dynein_IC2"/>
    <property type="match status" value="1"/>
</dbReference>
<dbReference type="Pfam" id="PF00400">
    <property type="entry name" value="WD40"/>
    <property type="match status" value="2"/>
</dbReference>
<dbReference type="SMART" id="SM00320">
    <property type="entry name" value="WD40"/>
    <property type="match status" value="5"/>
</dbReference>
<dbReference type="SUPFAM" id="SSF50978">
    <property type="entry name" value="WD40 repeat-like"/>
    <property type="match status" value="1"/>
</dbReference>
<dbReference type="PROSITE" id="PS50294">
    <property type="entry name" value="WD_REPEATS_REGION"/>
    <property type="match status" value="1"/>
</dbReference>
<reference key="1">
    <citation type="journal article" date="1999" name="Genomics">
        <title>Cloning and characterization of two cytoplasmic dynein intermediate chain genes in mouse and human.</title>
        <authorList>
            <person name="Crackower M.A."/>
            <person name="Sinasac D.S."/>
            <person name="Xia J."/>
            <person name="Motoyama J."/>
            <person name="Prochazka M."/>
            <person name="Rommens J.M."/>
            <person name="Scherer S.W."/>
            <person name="Tsui L.-C."/>
        </authorList>
    </citation>
    <scope>NUCLEOTIDE SEQUENCE [MRNA] (ISOFORMS 1A AND 1B)</scope>
</reference>
<reference key="2">
    <citation type="submission" date="2005-07" db="EMBL/GenBank/DDBJ databases">
        <authorList>
            <person name="Mural R.J."/>
            <person name="Adams M.D."/>
            <person name="Myers E.W."/>
            <person name="Smith H.O."/>
            <person name="Venter J.C."/>
        </authorList>
    </citation>
    <scope>NUCLEOTIDE SEQUENCE [LARGE SCALE GENOMIC DNA]</scope>
</reference>
<reference key="3">
    <citation type="journal article" date="2004" name="Genome Res.">
        <title>The status, quality, and expansion of the NIH full-length cDNA project: the Mammalian Gene Collection (MGC).</title>
        <authorList>
            <consortium name="The MGC Project Team"/>
        </authorList>
    </citation>
    <scope>NUCLEOTIDE SEQUENCE [LARGE SCALE MRNA]</scope>
    <source>
        <strain>C57BL/6J</strain>
        <tissue>Brain</tissue>
    </source>
</reference>
<reference key="4">
    <citation type="journal article" date="2001" name="J. Biol. Chem.">
        <title>The 8-kDa dynein light chain binds to its targets via a conserved (K/R)XTQT motif.</title>
        <authorList>
            <person name="Lo K.W."/>
            <person name="Naisbitt S."/>
            <person name="Fan J.S."/>
            <person name="Sheng M."/>
            <person name="Zhang M."/>
        </authorList>
    </citation>
    <scope>INTERACTION WITH DYNLL2</scope>
    <scope>MUTAGENESIS OF 151-LYS--THR-155</scope>
</reference>
<reference key="5">
    <citation type="journal article" date="2006" name="Mol. Cell. Proteomics">
        <title>Comprehensive identification of phosphorylation sites in postsynaptic density preparations.</title>
        <authorList>
            <person name="Trinidad J.C."/>
            <person name="Specht C.G."/>
            <person name="Thalhammer A."/>
            <person name="Schoepfer R."/>
            <person name="Burlingame A.L."/>
        </authorList>
    </citation>
    <scope>IDENTIFICATION BY MASS SPECTROMETRY [LARGE SCALE ANALYSIS]</scope>
    <source>
        <tissue>Brain</tissue>
    </source>
</reference>
<reference key="6">
    <citation type="journal article" date="2010" name="Cell">
        <title>A tissue-specific atlas of mouse protein phosphorylation and expression.</title>
        <authorList>
            <person name="Huttlin E.L."/>
            <person name="Jedrychowski M.P."/>
            <person name="Elias J.E."/>
            <person name="Goswami T."/>
            <person name="Rad R."/>
            <person name="Beausoleil S.A."/>
            <person name="Villen J."/>
            <person name="Haas W."/>
            <person name="Sowa M.E."/>
            <person name="Gygi S.P."/>
        </authorList>
    </citation>
    <scope>PHOSPHORYLATION [LARGE SCALE ANALYSIS] AT SER-50; SER-94; SER-97; THR-159; SER-162; SER-180 AND SER-618</scope>
    <scope>IDENTIFICATION BY MASS SPECTROMETRY [LARGE SCALE ANALYSIS]</scope>
    <source>
        <tissue>Brain</tissue>
        <tissue>Testis</tissue>
    </source>
</reference>
<feature type="initiator methionine" description="Removed" evidence="3">
    <location>
        <position position="1"/>
    </location>
</feature>
<feature type="chain" id="PRO_0000114653" description="Cytoplasmic dynein 1 intermediate chain 1">
    <location>
        <begin position="2"/>
        <end position="628"/>
    </location>
</feature>
<feature type="repeat" description="WD 1">
    <location>
        <begin position="268"/>
        <end position="317"/>
    </location>
</feature>
<feature type="repeat" description="WD 2">
    <location>
        <begin position="321"/>
        <end position="361"/>
    </location>
</feature>
<feature type="repeat" description="WD 3">
    <location>
        <begin position="370"/>
        <end position="411"/>
    </location>
</feature>
<feature type="repeat" description="WD 4">
    <location>
        <begin position="420"/>
        <end position="460"/>
    </location>
</feature>
<feature type="repeat" description="WD 5">
    <location>
        <begin position="465"/>
        <end position="510"/>
    </location>
</feature>
<feature type="repeat" description="WD 6">
    <location>
        <begin position="513"/>
        <end position="553"/>
    </location>
</feature>
<feature type="repeat" description="WD 7">
    <location>
        <begin position="559"/>
        <end position="598"/>
    </location>
</feature>
<feature type="region of interest" description="Disordered" evidence="5">
    <location>
        <begin position="1"/>
        <end position="114"/>
    </location>
</feature>
<feature type="region of interest" description="Interaction with DYNLT1" evidence="2">
    <location>
        <begin position="130"/>
        <end position="146"/>
    </location>
</feature>
<feature type="region of interest" description="Disordered" evidence="5">
    <location>
        <begin position="152"/>
        <end position="204"/>
    </location>
</feature>
<feature type="compositionally biased region" description="Basic and acidic residues" evidence="5">
    <location>
        <begin position="1"/>
        <end position="13"/>
    </location>
</feature>
<feature type="compositionally biased region" description="Basic and acidic residues" evidence="5">
    <location>
        <begin position="20"/>
        <end position="60"/>
    </location>
</feature>
<feature type="compositionally biased region" description="Pro residues" evidence="5">
    <location>
        <begin position="70"/>
        <end position="79"/>
    </location>
</feature>
<feature type="compositionally biased region" description="Low complexity" evidence="5">
    <location>
        <begin position="80"/>
        <end position="90"/>
    </location>
</feature>
<feature type="compositionally biased region" description="Polar residues" evidence="5">
    <location>
        <begin position="105"/>
        <end position="114"/>
    </location>
</feature>
<feature type="compositionally biased region" description="Basic and acidic residues" evidence="5">
    <location>
        <begin position="172"/>
        <end position="204"/>
    </location>
</feature>
<feature type="modified residue" description="N-acetylserine" evidence="3">
    <location>
        <position position="2"/>
    </location>
</feature>
<feature type="modified residue" description="Phosphoserine" evidence="9">
    <location>
        <position position="50"/>
    </location>
</feature>
<feature type="modified residue" description="Phosphoserine" evidence="4">
    <location>
        <position position="83"/>
    </location>
</feature>
<feature type="modified residue" description="Phosphothreonine" evidence="3">
    <location>
        <position position="88"/>
    </location>
</feature>
<feature type="modified residue" description="Phosphoserine" evidence="3">
    <location>
        <position position="90"/>
    </location>
</feature>
<feature type="modified residue" description="Phosphoserine" evidence="9">
    <location>
        <position position="94"/>
    </location>
</feature>
<feature type="modified residue" description="Phosphoserine" evidence="9">
    <location>
        <position position="97"/>
    </location>
</feature>
<feature type="modified residue" description="Phosphothreonine" evidence="9">
    <location>
        <position position="159"/>
    </location>
</feature>
<feature type="modified residue" description="Phosphoserine" evidence="9">
    <location>
        <position position="162"/>
    </location>
</feature>
<feature type="modified residue" description="Phosphoserine" evidence="9">
    <location>
        <position position="180"/>
    </location>
</feature>
<feature type="modified residue" description="Phosphoserine" evidence="9">
    <location>
        <position position="618"/>
    </location>
</feature>
<feature type="splice variant" id="VSP_001334" description="In isoform 1B." evidence="7">
    <location>
        <begin position="106"/>
        <end position="125"/>
    </location>
</feature>
<feature type="mutagenesis site" description="Abolishes interaction with DYNLL2." evidence="6">
    <location>
        <begin position="151"/>
        <end position="155"/>
    </location>
</feature>
<feature type="mutagenesis site" description="Impairs interaction with DYNLL2.">
    <original>T</original>
    <variation>A</variation>
    <location>
        <position position="153"/>
    </location>
</feature>
<feature type="mutagenesis site" description="Abolishes interaction with DYNLL2.">
    <original>T</original>
    <variation>G</variation>
    <location>
        <position position="153"/>
    </location>
</feature>
<feature type="mutagenesis site" description="Abolishes interaction with DYNLL2.">
    <original>Q</original>
    <variation>A</variation>
    <location>
        <position position="154"/>
    </location>
</feature>
<feature type="mutagenesis site" description="Abolishes interaction with DYNLL2.">
    <original>T</original>
    <variation>G</variation>
    <location>
        <position position="155"/>
    </location>
</feature>
<feature type="mutagenesis site" description="Impairs interaction with DYNLL2.">
    <original>T</original>
    <variation>S</variation>
    <location>
        <position position="155"/>
    </location>
</feature>
<feature type="sequence conflict" description="In Ref. 1; AAC33444." evidence="8" ref="1">
    <original>Q</original>
    <variation>H</variation>
    <location>
        <position position="384"/>
    </location>
</feature>
<feature type="sequence conflict" description="In Ref. 1; AAC33444." evidence="8" ref="1">
    <original>H</original>
    <variation>R</variation>
    <location>
        <position position="387"/>
    </location>
</feature>
<feature type="sequence conflict" description="In Ref. 1; AAC33444." evidence="8" ref="1">
    <original>L</original>
    <variation>V</variation>
    <location>
        <position position="508"/>
    </location>
</feature>
<feature type="sequence conflict" description="In Ref. 1; AAC33444." evidence="8" ref="1">
    <original>F</original>
    <variation>S</variation>
    <location>
        <position position="511"/>
    </location>
</feature>
<accession>O88485</accession>
<accession>O88486</accession>
<accession>Q80W09</accession>